<proteinExistence type="inferred from homology"/>
<evidence type="ECO:0000250" key="1"/>
<evidence type="ECO:0000305" key="2"/>
<dbReference type="EMBL" id="AE000516">
    <property type="protein sequence ID" value="AAK46122.1"/>
    <property type="molecule type" value="Genomic_DNA"/>
</dbReference>
<dbReference type="PIR" id="B70931">
    <property type="entry name" value="B70931"/>
</dbReference>
<dbReference type="RefSeq" id="WP_003899026.1">
    <property type="nucleotide sequence ID" value="NZ_KK341227.1"/>
</dbReference>
<dbReference type="SMR" id="P9WI08"/>
<dbReference type="KEGG" id="mtc:MT1850"/>
<dbReference type="PATRIC" id="fig|83331.31.peg.1992"/>
<dbReference type="HOGENOM" id="CLU_000243_0_1_11"/>
<dbReference type="Proteomes" id="UP000001020">
    <property type="component" value="Chromosome"/>
</dbReference>
<dbReference type="GO" id="GO:0052572">
    <property type="term" value="P:response to host immune response"/>
    <property type="evidence" value="ECO:0007669"/>
    <property type="project" value="TreeGrafter"/>
</dbReference>
<dbReference type="FunFam" id="1.20.1260.20:FF:000001">
    <property type="entry name" value="PPE family protein PPE41"/>
    <property type="match status" value="1"/>
</dbReference>
<dbReference type="Gene3D" id="1.20.1260.20">
    <property type="entry name" value="PPE superfamily"/>
    <property type="match status" value="1"/>
</dbReference>
<dbReference type="InterPro" id="IPR022171">
    <property type="entry name" value="PPE_C"/>
</dbReference>
<dbReference type="InterPro" id="IPR000030">
    <property type="entry name" value="PPE_dom"/>
</dbReference>
<dbReference type="InterPro" id="IPR038332">
    <property type="entry name" value="PPE_sf"/>
</dbReference>
<dbReference type="PANTHER" id="PTHR46766">
    <property type="entry name" value="GLUTAMINE-RICH PROTEIN 2"/>
    <property type="match status" value="1"/>
</dbReference>
<dbReference type="PANTHER" id="PTHR46766:SF1">
    <property type="entry name" value="GLUTAMINE-RICH PROTEIN 2"/>
    <property type="match status" value="1"/>
</dbReference>
<dbReference type="Pfam" id="PF00823">
    <property type="entry name" value="PPE"/>
    <property type="match status" value="1"/>
</dbReference>
<dbReference type="Pfam" id="PF12484">
    <property type="entry name" value="PPE-SVP"/>
    <property type="match status" value="1"/>
</dbReference>
<dbReference type="SUPFAM" id="SSF140459">
    <property type="entry name" value="PE/PPE dimer-like"/>
    <property type="match status" value="1"/>
</dbReference>
<keyword id="KW-1185">Reference proteome</keyword>
<sequence length="423" mass="41477">MDFGLLPPEINSGRMYTGPGPGPMLAAATAWDGLAVELHATAAGYASELSALTGAWSGPSSTSMASAAAPYVAWMSATAVHAELAGAQARLAIAAYEAAFAATVPPPVIAANRAQLMVLIATNIFGQNTPAIMMTEAQYMEMWAQDAAAMYGYAGSSATASRMTAFTEPPQTTNHGQLGAQSSAVAQTAATAAGGNLQSAFPQLLSAVPRALQGLALPTASQSASATPQWVTDLGNLSTFLGGAVTGPYTFPGVLPPSGVPYLLGIQSVLVTQNGQGVSALLGKIGGKPITGALAPLAEFALHTPILGSEGLGGGSVSAGIGRAGLVGKLSVPQGWTVAAPEIPSPAAALQATRLAAAPIAATDGAGALLGGMALSGLAGRAAAGSTGHPIGSAAAPAVGAAAAAVEDLATEANIFVIPAMDD</sequence>
<accession>P9WI08</accession>
<accession>L0T7Q9</accession>
<accession>Q79FK1</accession>
<accession>Q7D7X9</accession>
<reference key="1">
    <citation type="journal article" date="2002" name="J. Bacteriol.">
        <title>Whole-genome comparison of Mycobacterium tuberculosis clinical and laboratory strains.</title>
        <authorList>
            <person name="Fleischmann R.D."/>
            <person name="Alland D."/>
            <person name="Eisen J.A."/>
            <person name="Carpenter L."/>
            <person name="White O."/>
            <person name="Peterson J.D."/>
            <person name="DeBoy R.T."/>
            <person name="Dodson R.J."/>
            <person name="Gwinn M.L."/>
            <person name="Haft D.H."/>
            <person name="Hickey E.K."/>
            <person name="Kolonay J.F."/>
            <person name="Nelson W.C."/>
            <person name="Umayam L.A."/>
            <person name="Ermolaeva M.D."/>
            <person name="Salzberg S.L."/>
            <person name="Delcher A."/>
            <person name="Utterback T.R."/>
            <person name="Weidman J.F."/>
            <person name="Khouri H.M."/>
            <person name="Gill J."/>
            <person name="Mikula A."/>
            <person name="Bishai W."/>
            <person name="Jacobs W.R. Jr."/>
            <person name="Venter J.C."/>
            <person name="Fraser C.M."/>
        </authorList>
    </citation>
    <scope>NUCLEOTIDE SEQUENCE [LARGE SCALE GENOMIC DNA]</scope>
    <source>
        <strain>CDC 1551 / Oshkosh</strain>
    </source>
</reference>
<comment type="function">
    <text evidence="1">Could be required for host endothelial-cell invasion and/or intracellular survival.</text>
</comment>
<comment type="similarity">
    <text evidence="2">Belongs to the mycobacterial PPE family.</text>
</comment>
<name>PPE29_MYCTO</name>
<organism>
    <name type="scientific">Mycobacterium tuberculosis (strain CDC 1551 / Oshkosh)</name>
    <dbReference type="NCBI Taxonomy" id="83331"/>
    <lineage>
        <taxon>Bacteria</taxon>
        <taxon>Bacillati</taxon>
        <taxon>Actinomycetota</taxon>
        <taxon>Actinomycetes</taxon>
        <taxon>Mycobacteriales</taxon>
        <taxon>Mycobacteriaceae</taxon>
        <taxon>Mycobacterium</taxon>
        <taxon>Mycobacterium tuberculosis complex</taxon>
    </lineage>
</organism>
<protein>
    <recommendedName>
        <fullName>Uncharacterized PPE family protein PPE29</fullName>
    </recommendedName>
</protein>
<gene>
    <name type="primary">PPE29</name>
    <name type="ordered locus">MT1850</name>
</gene>
<feature type="chain" id="PRO_0000428089" description="Uncharacterized PPE family protein PPE29">
    <location>
        <begin position="1"/>
        <end position="423"/>
    </location>
</feature>